<accession>B9KYX5</accession>
<keyword id="KW-1185">Reference proteome</keyword>
<keyword id="KW-0687">Ribonucleoprotein</keyword>
<keyword id="KW-0689">Ribosomal protein</keyword>
<keyword id="KW-0694">RNA-binding</keyword>
<keyword id="KW-0699">rRNA-binding</keyword>
<name>RL10_THERP</name>
<proteinExistence type="inferred from homology"/>
<organism>
    <name type="scientific">Thermomicrobium roseum (strain ATCC 27502 / DSM 5159 / P-2)</name>
    <dbReference type="NCBI Taxonomy" id="309801"/>
    <lineage>
        <taxon>Bacteria</taxon>
        <taxon>Pseudomonadati</taxon>
        <taxon>Thermomicrobiota</taxon>
        <taxon>Thermomicrobia</taxon>
        <taxon>Thermomicrobiales</taxon>
        <taxon>Thermomicrobiaceae</taxon>
        <taxon>Thermomicrobium</taxon>
    </lineage>
</organism>
<evidence type="ECO:0000255" key="1">
    <source>
        <dbReference type="HAMAP-Rule" id="MF_00362"/>
    </source>
</evidence>
<evidence type="ECO:0000305" key="2"/>
<feature type="chain" id="PRO_1000195572" description="Large ribosomal subunit protein uL10">
    <location>
        <begin position="1"/>
        <end position="179"/>
    </location>
</feature>
<reference key="1">
    <citation type="journal article" date="2009" name="PLoS ONE">
        <title>Complete genome sequence of the aerobic CO-oxidizing thermophile Thermomicrobium roseum.</title>
        <authorList>
            <person name="Wu D."/>
            <person name="Raymond J."/>
            <person name="Wu M."/>
            <person name="Chatterji S."/>
            <person name="Ren Q."/>
            <person name="Graham J.E."/>
            <person name="Bryant D.A."/>
            <person name="Robb F."/>
            <person name="Colman A."/>
            <person name="Tallon L.J."/>
            <person name="Badger J.H."/>
            <person name="Madupu R."/>
            <person name="Ward N.L."/>
            <person name="Eisen J.A."/>
        </authorList>
    </citation>
    <scope>NUCLEOTIDE SEQUENCE [LARGE SCALE GENOMIC DNA]</scope>
    <source>
        <strain>ATCC 27502 / DSM 5159 / P-2</strain>
    </source>
</reference>
<comment type="function">
    <text evidence="1">Forms part of the ribosomal stalk, playing a central role in the interaction of the ribosome with GTP-bound translation factors.</text>
</comment>
<comment type="subunit">
    <text evidence="1">Part of the ribosomal stalk of the 50S ribosomal subunit. The N-terminus interacts with L11 and the large rRNA to form the base of the stalk. The C-terminus forms an elongated spine to which L12 dimers bind in a sequential fashion forming a multimeric L10(L12)X complex.</text>
</comment>
<comment type="similarity">
    <text evidence="1">Belongs to the universal ribosomal protein uL10 family.</text>
</comment>
<dbReference type="EMBL" id="CP001275">
    <property type="protein sequence ID" value="ACM06067.1"/>
    <property type="molecule type" value="Genomic_DNA"/>
</dbReference>
<dbReference type="RefSeq" id="WP_012642075.1">
    <property type="nucleotide sequence ID" value="NC_011959.1"/>
</dbReference>
<dbReference type="SMR" id="B9KYX5"/>
<dbReference type="STRING" id="309801.trd_0683"/>
<dbReference type="KEGG" id="tro:trd_0683"/>
<dbReference type="eggNOG" id="COG0244">
    <property type="taxonomic scope" value="Bacteria"/>
</dbReference>
<dbReference type="HOGENOM" id="CLU_092227_2_1_0"/>
<dbReference type="OrthoDB" id="9808307at2"/>
<dbReference type="Proteomes" id="UP000000447">
    <property type="component" value="Chromosome"/>
</dbReference>
<dbReference type="GO" id="GO:0015934">
    <property type="term" value="C:large ribosomal subunit"/>
    <property type="evidence" value="ECO:0007669"/>
    <property type="project" value="InterPro"/>
</dbReference>
<dbReference type="GO" id="GO:0070180">
    <property type="term" value="F:large ribosomal subunit rRNA binding"/>
    <property type="evidence" value="ECO:0007669"/>
    <property type="project" value="UniProtKB-UniRule"/>
</dbReference>
<dbReference type="GO" id="GO:0003735">
    <property type="term" value="F:structural constituent of ribosome"/>
    <property type="evidence" value="ECO:0007669"/>
    <property type="project" value="InterPro"/>
</dbReference>
<dbReference type="GO" id="GO:0006412">
    <property type="term" value="P:translation"/>
    <property type="evidence" value="ECO:0007669"/>
    <property type="project" value="UniProtKB-UniRule"/>
</dbReference>
<dbReference type="CDD" id="cd05797">
    <property type="entry name" value="Ribosomal_L10"/>
    <property type="match status" value="1"/>
</dbReference>
<dbReference type="Gene3D" id="3.30.70.1730">
    <property type="match status" value="1"/>
</dbReference>
<dbReference type="Gene3D" id="6.10.250.290">
    <property type="match status" value="1"/>
</dbReference>
<dbReference type="HAMAP" id="MF_00362">
    <property type="entry name" value="Ribosomal_uL10"/>
    <property type="match status" value="1"/>
</dbReference>
<dbReference type="InterPro" id="IPR001790">
    <property type="entry name" value="Ribosomal_uL10"/>
</dbReference>
<dbReference type="InterPro" id="IPR043141">
    <property type="entry name" value="Ribosomal_uL10-like_sf"/>
</dbReference>
<dbReference type="InterPro" id="IPR022973">
    <property type="entry name" value="Ribosomal_uL10_bac"/>
</dbReference>
<dbReference type="InterPro" id="IPR047865">
    <property type="entry name" value="Ribosomal_uL10_bac_type"/>
</dbReference>
<dbReference type="InterPro" id="IPR002363">
    <property type="entry name" value="Ribosomal_uL10_CS_bac"/>
</dbReference>
<dbReference type="NCBIfam" id="NF000955">
    <property type="entry name" value="PRK00099.1-1"/>
    <property type="match status" value="1"/>
</dbReference>
<dbReference type="PANTHER" id="PTHR11560">
    <property type="entry name" value="39S RIBOSOMAL PROTEIN L10, MITOCHONDRIAL"/>
    <property type="match status" value="1"/>
</dbReference>
<dbReference type="Pfam" id="PF00466">
    <property type="entry name" value="Ribosomal_L10"/>
    <property type="match status" value="1"/>
</dbReference>
<dbReference type="SUPFAM" id="SSF160369">
    <property type="entry name" value="Ribosomal protein L10-like"/>
    <property type="match status" value="1"/>
</dbReference>
<dbReference type="PROSITE" id="PS01109">
    <property type="entry name" value="RIBOSOMAL_L10"/>
    <property type="match status" value="1"/>
</dbReference>
<sequence length="179" mass="19204">MPTPEKARQIEEISEILRTASLAILTDYRGLSVADMTAFRRRLQEQQANFRVVKNTLTRIAAERTGTEVITPLLEGPTALVYSMGDPVAAAKLTLEFARQSRILSVKGGLLAGRLLSAADVEALATLPPREELLAKVVGGLQAPLYGLVSVLSGPIRGLLYVLQARVRQLGGEEAAEAA</sequence>
<protein>
    <recommendedName>
        <fullName evidence="1">Large ribosomal subunit protein uL10</fullName>
    </recommendedName>
    <alternativeName>
        <fullName evidence="2">50S ribosomal protein L10</fullName>
    </alternativeName>
</protein>
<gene>
    <name evidence="1" type="primary">rplJ</name>
    <name type="ordered locus">trd_0683</name>
</gene>